<feature type="chain" id="PRO_0000433078" description="Auxin-responsive protein SAUR66">
    <location>
        <begin position="1"/>
        <end position="135"/>
    </location>
</feature>
<organism>
    <name type="scientific">Arabidopsis thaliana</name>
    <name type="common">Mouse-ear cress</name>
    <dbReference type="NCBI Taxonomy" id="3702"/>
    <lineage>
        <taxon>Eukaryota</taxon>
        <taxon>Viridiplantae</taxon>
        <taxon>Streptophyta</taxon>
        <taxon>Embryophyta</taxon>
        <taxon>Tracheophyta</taxon>
        <taxon>Spermatophyta</taxon>
        <taxon>Magnoliopsida</taxon>
        <taxon>eudicotyledons</taxon>
        <taxon>Gunneridae</taxon>
        <taxon>Pentapetalae</taxon>
        <taxon>rosids</taxon>
        <taxon>malvids</taxon>
        <taxon>Brassicales</taxon>
        <taxon>Brassicaceae</taxon>
        <taxon>Camelineae</taxon>
        <taxon>Arabidopsis</taxon>
    </lineage>
</organism>
<proteinExistence type="evidence at transcript level"/>
<comment type="function">
    <text evidence="1">May promote auxin-stimulated organ elongation, such as hypocotyls, stamen filaments and petals.</text>
</comment>
<comment type="subcellular location">
    <subcellularLocation>
        <location evidence="1">Cell membrane</location>
        <topology evidence="1">Peripheral membrane protein</topology>
    </subcellularLocation>
</comment>
<comment type="similarity">
    <text evidence="3">Belongs to the ARG7 family.</text>
</comment>
<reference key="1">
    <citation type="journal article" date="2000" name="Nature">
        <title>Sequence and analysis of chromosome 1 of the plant Arabidopsis thaliana.</title>
        <authorList>
            <person name="Theologis A."/>
            <person name="Ecker J.R."/>
            <person name="Palm C.J."/>
            <person name="Federspiel N.A."/>
            <person name="Kaul S."/>
            <person name="White O."/>
            <person name="Alonso J."/>
            <person name="Altafi H."/>
            <person name="Araujo R."/>
            <person name="Bowman C.L."/>
            <person name="Brooks S.Y."/>
            <person name="Buehler E."/>
            <person name="Chan A."/>
            <person name="Chao Q."/>
            <person name="Chen H."/>
            <person name="Cheuk R.F."/>
            <person name="Chin C.W."/>
            <person name="Chung M.K."/>
            <person name="Conn L."/>
            <person name="Conway A.B."/>
            <person name="Conway A.R."/>
            <person name="Creasy T.H."/>
            <person name="Dewar K."/>
            <person name="Dunn P."/>
            <person name="Etgu P."/>
            <person name="Feldblyum T.V."/>
            <person name="Feng J.-D."/>
            <person name="Fong B."/>
            <person name="Fujii C.Y."/>
            <person name="Gill J.E."/>
            <person name="Goldsmith A.D."/>
            <person name="Haas B."/>
            <person name="Hansen N.F."/>
            <person name="Hughes B."/>
            <person name="Huizar L."/>
            <person name="Hunter J.L."/>
            <person name="Jenkins J."/>
            <person name="Johnson-Hopson C."/>
            <person name="Khan S."/>
            <person name="Khaykin E."/>
            <person name="Kim C.J."/>
            <person name="Koo H.L."/>
            <person name="Kremenetskaia I."/>
            <person name="Kurtz D.B."/>
            <person name="Kwan A."/>
            <person name="Lam B."/>
            <person name="Langin-Hooper S."/>
            <person name="Lee A."/>
            <person name="Lee J.M."/>
            <person name="Lenz C.A."/>
            <person name="Li J.H."/>
            <person name="Li Y.-P."/>
            <person name="Lin X."/>
            <person name="Liu S.X."/>
            <person name="Liu Z.A."/>
            <person name="Luros J.S."/>
            <person name="Maiti R."/>
            <person name="Marziali A."/>
            <person name="Militscher J."/>
            <person name="Miranda M."/>
            <person name="Nguyen M."/>
            <person name="Nierman W.C."/>
            <person name="Osborne B.I."/>
            <person name="Pai G."/>
            <person name="Peterson J."/>
            <person name="Pham P.K."/>
            <person name="Rizzo M."/>
            <person name="Rooney T."/>
            <person name="Rowley D."/>
            <person name="Sakano H."/>
            <person name="Salzberg S.L."/>
            <person name="Schwartz J.R."/>
            <person name="Shinn P."/>
            <person name="Southwick A.M."/>
            <person name="Sun H."/>
            <person name="Tallon L.J."/>
            <person name="Tambunga G."/>
            <person name="Toriumi M.J."/>
            <person name="Town C.D."/>
            <person name="Utterback T."/>
            <person name="Van Aken S."/>
            <person name="Vaysberg M."/>
            <person name="Vysotskaia V.S."/>
            <person name="Walker M."/>
            <person name="Wu D."/>
            <person name="Yu G."/>
            <person name="Fraser C.M."/>
            <person name="Venter J.C."/>
            <person name="Davis R.W."/>
        </authorList>
    </citation>
    <scope>NUCLEOTIDE SEQUENCE [LARGE SCALE GENOMIC DNA]</scope>
    <source>
        <strain>cv. Columbia</strain>
    </source>
</reference>
<reference key="2">
    <citation type="journal article" date="2017" name="Plant J.">
        <title>Araport11: a complete reannotation of the Arabidopsis thaliana reference genome.</title>
        <authorList>
            <person name="Cheng C.Y."/>
            <person name="Krishnakumar V."/>
            <person name="Chan A.P."/>
            <person name="Thibaud-Nissen F."/>
            <person name="Schobel S."/>
            <person name="Town C.D."/>
        </authorList>
    </citation>
    <scope>GENOME REANNOTATION</scope>
    <source>
        <strain>cv. Columbia</strain>
    </source>
</reference>
<reference key="3">
    <citation type="journal article" date="2003" name="Science">
        <title>Empirical analysis of transcriptional activity in the Arabidopsis genome.</title>
        <authorList>
            <person name="Yamada K."/>
            <person name="Lim J."/>
            <person name="Dale J.M."/>
            <person name="Chen H."/>
            <person name="Shinn P."/>
            <person name="Palm C.J."/>
            <person name="Southwick A.M."/>
            <person name="Wu H.C."/>
            <person name="Kim C.J."/>
            <person name="Nguyen M."/>
            <person name="Pham P.K."/>
            <person name="Cheuk R.F."/>
            <person name="Karlin-Newmann G."/>
            <person name="Liu S.X."/>
            <person name="Lam B."/>
            <person name="Sakano H."/>
            <person name="Wu T."/>
            <person name="Yu G."/>
            <person name="Miranda M."/>
            <person name="Quach H.L."/>
            <person name="Tripp M."/>
            <person name="Chang C.H."/>
            <person name="Lee J.M."/>
            <person name="Toriumi M.J."/>
            <person name="Chan M.M."/>
            <person name="Tang C.C."/>
            <person name="Onodera C.S."/>
            <person name="Deng J.M."/>
            <person name="Akiyama K."/>
            <person name="Ansari Y."/>
            <person name="Arakawa T."/>
            <person name="Banh J."/>
            <person name="Banno F."/>
            <person name="Bowser L."/>
            <person name="Brooks S.Y."/>
            <person name="Carninci P."/>
            <person name="Chao Q."/>
            <person name="Choy N."/>
            <person name="Enju A."/>
            <person name="Goldsmith A.D."/>
            <person name="Gurjal M."/>
            <person name="Hansen N.F."/>
            <person name="Hayashizaki Y."/>
            <person name="Johnson-Hopson C."/>
            <person name="Hsuan V.W."/>
            <person name="Iida K."/>
            <person name="Karnes M."/>
            <person name="Khan S."/>
            <person name="Koesema E."/>
            <person name="Ishida J."/>
            <person name="Jiang P.X."/>
            <person name="Jones T."/>
            <person name="Kawai J."/>
            <person name="Kamiya A."/>
            <person name="Meyers C."/>
            <person name="Nakajima M."/>
            <person name="Narusaka M."/>
            <person name="Seki M."/>
            <person name="Sakurai T."/>
            <person name="Satou M."/>
            <person name="Tamse R."/>
            <person name="Vaysberg M."/>
            <person name="Wallender E.K."/>
            <person name="Wong C."/>
            <person name="Yamamura Y."/>
            <person name="Yuan S."/>
            <person name="Shinozaki K."/>
            <person name="Davis R.W."/>
            <person name="Theologis A."/>
            <person name="Ecker J.R."/>
        </authorList>
    </citation>
    <scope>NUCLEOTIDE SEQUENCE [LARGE SCALE MRNA]</scope>
    <source>
        <strain>cv. Columbia</strain>
    </source>
</reference>
<reference key="4">
    <citation type="journal article" date="2002" name="Plant Mol. Biol.">
        <title>Auxin-responsive gene expression: genes, promoters and regulatory factors.</title>
        <authorList>
            <person name="Hagen G."/>
            <person name="Guilfoyle T.J."/>
        </authorList>
    </citation>
    <scope>GENE FAMILY</scope>
    <scope>NOMENCLATURE</scope>
</reference>
<evidence type="ECO:0000250" key="1">
    <source>
        <dbReference type="UniProtKB" id="F4I1H5"/>
    </source>
</evidence>
<evidence type="ECO:0000303" key="2">
    <source>
    </source>
</evidence>
<evidence type="ECO:0000305" key="3"/>
<evidence type="ECO:0000312" key="4">
    <source>
        <dbReference type="Araport" id="AT1G29500"/>
    </source>
</evidence>
<evidence type="ECO:0000312" key="5">
    <source>
        <dbReference type="EMBL" id="AAG51723.1"/>
    </source>
</evidence>
<dbReference type="EMBL" id="AC068667">
    <property type="protein sequence ID" value="AAG51723.1"/>
    <property type="molecule type" value="Genomic_DNA"/>
</dbReference>
<dbReference type="EMBL" id="CP002684">
    <property type="protein sequence ID" value="AEE31097.1"/>
    <property type="molecule type" value="Genomic_DNA"/>
</dbReference>
<dbReference type="EMBL" id="AY075651">
    <property type="protein sequence ID" value="AAL77658.1"/>
    <property type="molecule type" value="mRNA"/>
</dbReference>
<dbReference type="EMBL" id="AY097401">
    <property type="protein sequence ID" value="AAM19917.1"/>
    <property type="molecule type" value="mRNA"/>
</dbReference>
<dbReference type="PIR" id="H86417">
    <property type="entry name" value="H86417"/>
</dbReference>
<dbReference type="RefSeq" id="NP_174243.1">
    <property type="nucleotide sequence ID" value="NM_102690.3"/>
</dbReference>
<dbReference type="FunCoup" id="Q9C7Q1">
    <property type="interactions" value="146"/>
</dbReference>
<dbReference type="STRING" id="3702.Q9C7Q1"/>
<dbReference type="PaxDb" id="3702-AT1G29500.1"/>
<dbReference type="EnsemblPlants" id="AT1G29500.1">
    <property type="protein sequence ID" value="AT1G29500.1"/>
    <property type="gene ID" value="AT1G29500"/>
</dbReference>
<dbReference type="GeneID" id="839827"/>
<dbReference type="Gramene" id="AT1G29500.1">
    <property type="protein sequence ID" value="AT1G29500.1"/>
    <property type="gene ID" value="AT1G29500"/>
</dbReference>
<dbReference type="KEGG" id="ath:AT1G29500"/>
<dbReference type="Araport" id="AT1G29500"/>
<dbReference type="TAIR" id="AT1G29500">
    <property type="gene designation" value="SAUR66"/>
</dbReference>
<dbReference type="eggNOG" id="ENOG502S4GQ">
    <property type="taxonomic scope" value="Eukaryota"/>
</dbReference>
<dbReference type="HOGENOM" id="CLU_090137_1_1_1"/>
<dbReference type="InParanoid" id="Q9C7Q1"/>
<dbReference type="OMA" id="CCCTSTS"/>
<dbReference type="PhylomeDB" id="Q9C7Q1"/>
<dbReference type="PRO" id="PR:Q9C7Q1"/>
<dbReference type="Proteomes" id="UP000006548">
    <property type="component" value="Chromosome 1"/>
</dbReference>
<dbReference type="ExpressionAtlas" id="Q9C7Q1">
    <property type="expression patterns" value="baseline and differential"/>
</dbReference>
<dbReference type="GO" id="GO:0005730">
    <property type="term" value="C:nucleolus"/>
    <property type="evidence" value="ECO:0007005"/>
    <property type="project" value="TAIR"/>
</dbReference>
<dbReference type="GO" id="GO:0005634">
    <property type="term" value="C:nucleus"/>
    <property type="evidence" value="ECO:0007005"/>
    <property type="project" value="TAIR"/>
</dbReference>
<dbReference type="GO" id="GO:0005886">
    <property type="term" value="C:plasma membrane"/>
    <property type="evidence" value="ECO:0007669"/>
    <property type="project" value="UniProtKB-SubCell"/>
</dbReference>
<dbReference type="GO" id="GO:0009734">
    <property type="term" value="P:auxin-activated signaling pathway"/>
    <property type="evidence" value="ECO:0007669"/>
    <property type="project" value="UniProtKB-KW"/>
</dbReference>
<dbReference type="InterPro" id="IPR003676">
    <property type="entry name" value="SAUR_fam"/>
</dbReference>
<dbReference type="PANTHER" id="PTHR31175">
    <property type="entry name" value="AUXIN-RESPONSIVE FAMILY PROTEIN"/>
    <property type="match status" value="1"/>
</dbReference>
<dbReference type="PANTHER" id="PTHR31175:SF99">
    <property type="entry name" value="AUXIN-RESPONSIVE PROTEIN SAUR61-RELATED"/>
    <property type="match status" value="1"/>
</dbReference>
<dbReference type="Pfam" id="PF02519">
    <property type="entry name" value="Auxin_inducible"/>
    <property type="match status" value="1"/>
</dbReference>
<accession>Q9C7Q1</accession>
<keyword id="KW-0927">Auxin signaling pathway</keyword>
<keyword id="KW-1003">Cell membrane</keyword>
<keyword id="KW-0217">Developmental protein</keyword>
<keyword id="KW-0341">Growth regulation</keyword>
<keyword id="KW-0472">Membrane</keyword>
<keyword id="KW-1185">Reference proteome</keyword>
<name>SAU66_ARATH</name>
<gene>
    <name evidence="2" type="primary">SAUR66</name>
    <name evidence="4" type="ordered locus">At1g29500</name>
    <name evidence="5" type="ORF">F15D2.8</name>
</gene>
<protein>
    <recommendedName>
        <fullName evidence="3">Auxin-responsive protein SAUR66</fullName>
    </recommendedName>
    <alternativeName>
        <fullName evidence="2">Protein SMALL AUXIN UP RNA 66</fullName>
    </alternativeName>
</protein>
<sequence length="135" mass="15664">MMNTKKLIKMFRKWQQRAALHRKRISFQRPSTRSTTVEKGCFVVYTADNTRFAFPISYLSNSVFQEILEISEEEFGLPTGGPITLPFDSVFLEYLIKLIKRRMDGDTEKALLMSISSARCSLQKQEQSTQQLLVF</sequence>